<gene>
    <name type="primary">lyrm1</name>
</gene>
<name>LYRM1_XENLA</name>
<protein>
    <recommendedName>
        <fullName>LYR motif-containing protein 1</fullName>
    </recommendedName>
</protein>
<sequence length="122" mass="14400">MTAGTRPEVLHLYRQIFRIARKWQAASGLMEETIKEREYIVDEARKLFHRNKQITDVAMIKECTEECKARIEIGLHYRNPYPRPIHLPPLGLALPHSKVFRAQEKLRKQAKPVYLKSYDEIS</sequence>
<proteinExistence type="evidence at transcript level"/>
<comment type="similarity">
    <text evidence="1">Belongs to the complex I LYR family.</text>
</comment>
<organism>
    <name type="scientific">Xenopus laevis</name>
    <name type="common">African clawed frog</name>
    <dbReference type="NCBI Taxonomy" id="8355"/>
    <lineage>
        <taxon>Eukaryota</taxon>
        <taxon>Metazoa</taxon>
        <taxon>Chordata</taxon>
        <taxon>Craniata</taxon>
        <taxon>Vertebrata</taxon>
        <taxon>Euteleostomi</taxon>
        <taxon>Amphibia</taxon>
        <taxon>Batrachia</taxon>
        <taxon>Anura</taxon>
        <taxon>Pipoidea</taxon>
        <taxon>Pipidae</taxon>
        <taxon>Xenopodinae</taxon>
        <taxon>Xenopus</taxon>
        <taxon>Xenopus</taxon>
    </lineage>
</organism>
<dbReference type="EMBL" id="BC157749">
    <property type="protein sequence ID" value="AAI57750.1"/>
    <property type="molecule type" value="mRNA"/>
</dbReference>
<dbReference type="RefSeq" id="NP_001108304.1">
    <property type="nucleotide sequence ID" value="NM_001114832.1"/>
</dbReference>
<dbReference type="SMR" id="A9UMQ3"/>
<dbReference type="AGR" id="Xenbase:XB-GENE-1193905"/>
<dbReference type="Xenbase" id="XB-GENE-1193905">
    <property type="gene designation" value="lyrm1.S"/>
</dbReference>
<dbReference type="Proteomes" id="UP000186698">
    <property type="component" value="Unplaced"/>
</dbReference>
<dbReference type="Bgee" id="100137705">
    <property type="expression patterns" value="Expressed in internal ear and 20 other cell types or tissues"/>
</dbReference>
<dbReference type="GO" id="GO:0005739">
    <property type="term" value="C:mitochondrion"/>
    <property type="evidence" value="ECO:0007669"/>
    <property type="project" value="TreeGrafter"/>
</dbReference>
<dbReference type="CDD" id="cd20261">
    <property type="entry name" value="Complex1_LYR_LYRM1"/>
    <property type="match status" value="1"/>
</dbReference>
<dbReference type="InterPro" id="IPR008011">
    <property type="entry name" value="Complex1_LYR_dom"/>
</dbReference>
<dbReference type="InterPro" id="IPR045294">
    <property type="entry name" value="Complex1_LYR_LYRM1"/>
</dbReference>
<dbReference type="InterPro" id="IPR040330">
    <property type="entry name" value="LYRM1"/>
</dbReference>
<dbReference type="PANTHER" id="PTHR14273">
    <property type="entry name" value="LYR MOTIF-CONTAINING PROTEIN 1"/>
    <property type="match status" value="1"/>
</dbReference>
<dbReference type="PANTHER" id="PTHR14273:SF0">
    <property type="entry name" value="LYR MOTIF-CONTAINING PROTEIN 1"/>
    <property type="match status" value="1"/>
</dbReference>
<dbReference type="Pfam" id="PF05347">
    <property type="entry name" value="Complex1_LYR"/>
    <property type="match status" value="1"/>
</dbReference>
<evidence type="ECO:0000305" key="1"/>
<keyword id="KW-1185">Reference proteome</keyword>
<accession>A9UMQ3</accession>
<reference key="1">
    <citation type="submission" date="2007-12" db="EMBL/GenBank/DDBJ databases">
        <authorList>
            <consortium name="NIH - Xenopus Gene Collection (XGC) project"/>
        </authorList>
    </citation>
    <scope>NUCLEOTIDE SEQUENCE [LARGE SCALE MRNA]</scope>
    <source>
        <tissue>Embryo</tissue>
    </source>
</reference>
<feature type="chain" id="PRO_0000370329" description="LYR motif-containing protein 1">
    <location>
        <begin position="1"/>
        <end position="122"/>
    </location>
</feature>